<reference key="1">
    <citation type="journal article" date="1995" name="Science">
        <title>Whole-genome random sequencing and assembly of Haemophilus influenzae Rd.</title>
        <authorList>
            <person name="Fleischmann R.D."/>
            <person name="Adams M.D."/>
            <person name="White O."/>
            <person name="Clayton R.A."/>
            <person name="Kirkness E.F."/>
            <person name="Kerlavage A.R."/>
            <person name="Bult C.J."/>
            <person name="Tomb J.-F."/>
            <person name="Dougherty B.A."/>
            <person name="Merrick J.M."/>
            <person name="McKenney K."/>
            <person name="Sutton G.G."/>
            <person name="FitzHugh W."/>
            <person name="Fields C.A."/>
            <person name="Gocayne J.D."/>
            <person name="Scott J.D."/>
            <person name="Shirley R."/>
            <person name="Liu L.-I."/>
            <person name="Glodek A."/>
            <person name="Kelley J.M."/>
            <person name="Weidman J.F."/>
            <person name="Phillips C.A."/>
            <person name="Spriggs T."/>
            <person name="Hedblom E."/>
            <person name="Cotton M.D."/>
            <person name="Utterback T.R."/>
            <person name="Hanna M.C."/>
            <person name="Nguyen D.T."/>
            <person name="Saudek D.M."/>
            <person name="Brandon R.C."/>
            <person name="Fine L.D."/>
            <person name="Fritchman J.L."/>
            <person name="Fuhrmann J.L."/>
            <person name="Geoghagen N.S.M."/>
            <person name="Gnehm C.L."/>
            <person name="McDonald L.A."/>
            <person name="Small K.V."/>
            <person name="Fraser C.M."/>
            <person name="Smith H.O."/>
            <person name="Venter J.C."/>
        </authorList>
    </citation>
    <scope>NUCLEOTIDE SEQUENCE [LARGE SCALE GENOMIC DNA]</scope>
    <source>
        <strain>ATCC 51907 / DSM 11121 / KW20 / Rd</strain>
    </source>
</reference>
<protein>
    <recommendedName>
        <fullName>Mu-like prophage FluMu protein gp37</fullName>
    </recommendedName>
</protein>
<evidence type="ECO:0000305" key="1"/>
<accession>P44231</accession>
<proteinExistence type="predicted"/>
<keyword id="KW-1185">Reference proteome</keyword>
<organism>
    <name type="scientific">Haemophilus influenzae (strain ATCC 51907 / DSM 11121 / KW20 / Rd)</name>
    <dbReference type="NCBI Taxonomy" id="71421"/>
    <lineage>
        <taxon>Bacteria</taxon>
        <taxon>Pseudomonadati</taxon>
        <taxon>Pseudomonadota</taxon>
        <taxon>Gammaproteobacteria</taxon>
        <taxon>Pasteurellales</taxon>
        <taxon>Pasteurellaceae</taxon>
        <taxon>Haemophilus</taxon>
    </lineage>
</organism>
<name>VG37_HAEIN</name>
<feature type="chain" id="PRO_0000077831" description="Mu-like prophage FluMu protein gp37">
    <location>
        <begin position="1"/>
        <end position="194"/>
    </location>
</feature>
<dbReference type="EMBL" id="L42023">
    <property type="protein sequence ID" value="AAC23156.1"/>
    <property type="molecule type" value="Genomic_DNA"/>
</dbReference>
<dbReference type="PIR" id="G64033">
    <property type="entry name" value="G64033"/>
</dbReference>
<dbReference type="RefSeq" id="NP_439659.2">
    <property type="nucleotide sequence ID" value="NC_000907.1"/>
</dbReference>
<dbReference type="STRING" id="71421.HI_1509"/>
<dbReference type="EnsemblBacteria" id="AAC23156">
    <property type="protein sequence ID" value="AAC23156"/>
    <property type="gene ID" value="HI_1509"/>
</dbReference>
<dbReference type="KEGG" id="hin:HI_1509"/>
<dbReference type="PATRIC" id="fig|71421.8.peg.1579"/>
<dbReference type="eggNOG" id="COG5003">
    <property type="taxonomic scope" value="Bacteria"/>
</dbReference>
<dbReference type="HOGENOM" id="CLU_1515686_0_0_6"/>
<dbReference type="OrthoDB" id="6160520at2"/>
<dbReference type="Proteomes" id="UP000000579">
    <property type="component" value="Chromosome"/>
</dbReference>
<dbReference type="InterPro" id="IPR014972">
    <property type="entry name" value="Phage_Mu_Gp37"/>
</dbReference>
<dbReference type="Pfam" id="PF08873">
    <property type="entry name" value="Phage_Mu_Gp37"/>
    <property type="match status" value="1"/>
</dbReference>
<gene>
    <name type="ordered locus">HI_1509</name>
</gene>
<comment type="similarity">
    <text evidence="1">To phage Mu protein gp37.</text>
</comment>
<sequence>MGAQYLKRVYLMSVIAETNEALLAKIKALCGDYLREVDTHPGQWDDSSVRRLVRNPPAVYVAWLGQQPNNNPHTVTARWGVFVVAEVLNGQRRNAVGIYQIVETLTAGLHKQRIAPSGMFELQTVQNLWSDTQSGMGVAVYGMYFNAVQPLPDMTSDDTLCDFKIYDHTFNQDKDEHTIDGKTRLTVELPTQSD</sequence>